<comment type="function">
    <text evidence="1">Relaxes both positive and negative superturns and exhibits a strong decatenase activity.</text>
</comment>
<comment type="catalytic activity">
    <reaction evidence="1">
        <text>ATP-dependent breakage, passage and rejoining of double-stranded DNA.</text>
        <dbReference type="EC" id="5.6.2.2"/>
    </reaction>
</comment>
<comment type="cofactor">
    <cofactor evidence="1">
        <name>Mg(2+)</name>
        <dbReference type="ChEBI" id="CHEBI:18420"/>
    </cofactor>
</comment>
<comment type="subunit">
    <text evidence="1">Homodimer. Heterotetramer of two Top6A and two Top6B chains.</text>
</comment>
<comment type="similarity">
    <text evidence="1">Belongs to the TOP6A family.</text>
</comment>
<feature type="chain" id="PRO_0000145451" description="Type 2 DNA topoisomerase 6 subunit A">
    <location>
        <begin position="1"/>
        <end position="353"/>
    </location>
</feature>
<feature type="domain" description="Topo IIA-type catalytic" evidence="2">
    <location>
        <begin position="2"/>
        <end position="138"/>
    </location>
</feature>
<feature type="active site" description="O-(5'-phospho-DNA)-tyrosine intermediate" evidence="2">
    <location>
        <position position="96"/>
    </location>
</feature>
<feature type="binding site" evidence="1">
    <location>
        <position position="186"/>
    </location>
    <ligand>
        <name>Mg(2+)</name>
        <dbReference type="ChEBI" id="CHEBI:18420"/>
    </ligand>
</feature>
<feature type="binding site" evidence="1">
    <location>
        <position position="238"/>
    </location>
    <ligand>
        <name>Mg(2+)</name>
        <dbReference type="ChEBI" id="CHEBI:18420"/>
    </ligand>
</feature>
<organism>
    <name type="scientific">Methanothermobacter thermautotrophicus (strain ATCC 29096 / DSM 1053 / JCM 10044 / NBRC 100330 / Delta H)</name>
    <name type="common">Methanobacterium thermoautotrophicum</name>
    <dbReference type="NCBI Taxonomy" id="187420"/>
    <lineage>
        <taxon>Archaea</taxon>
        <taxon>Methanobacteriati</taxon>
        <taxon>Methanobacteriota</taxon>
        <taxon>Methanomada group</taxon>
        <taxon>Methanobacteria</taxon>
        <taxon>Methanobacteriales</taxon>
        <taxon>Methanobacteriaceae</taxon>
        <taxon>Methanothermobacter</taxon>
    </lineage>
</organism>
<proteinExistence type="inferred from homology"/>
<dbReference type="EC" id="5.6.2.2" evidence="1"/>
<dbReference type="EMBL" id="AE000666">
    <property type="protein sequence ID" value="AAB85504.1"/>
    <property type="molecule type" value="Genomic_DNA"/>
</dbReference>
<dbReference type="PIR" id="D69001">
    <property type="entry name" value="D69001"/>
</dbReference>
<dbReference type="RefSeq" id="WP_010876639.1">
    <property type="nucleotide sequence ID" value="NC_000916.1"/>
</dbReference>
<dbReference type="SMR" id="O27089"/>
<dbReference type="FunCoup" id="O27089">
    <property type="interactions" value="11"/>
</dbReference>
<dbReference type="STRING" id="187420.MTH_1008"/>
<dbReference type="PaxDb" id="187420-MTH_1008"/>
<dbReference type="EnsemblBacteria" id="AAB85504">
    <property type="protein sequence ID" value="AAB85504"/>
    <property type="gene ID" value="MTH_1008"/>
</dbReference>
<dbReference type="GeneID" id="1471416"/>
<dbReference type="KEGG" id="mth:MTH_1008"/>
<dbReference type="PATRIC" id="fig|187420.15.peg.991"/>
<dbReference type="HOGENOM" id="CLU_037229_1_0_2"/>
<dbReference type="InParanoid" id="O27089"/>
<dbReference type="BRENDA" id="3.5.4.10">
    <property type="organism ID" value="3256"/>
</dbReference>
<dbReference type="Proteomes" id="UP000005223">
    <property type="component" value="Chromosome"/>
</dbReference>
<dbReference type="GO" id="GO:0005694">
    <property type="term" value="C:chromosome"/>
    <property type="evidence" value="ECO:0007669"/>
    <property type="project" value="InterPro"/>
</dbReference>
<dbReference type="GO" id="GO:0005524">
    <property type="term" value="F:ATP binding"/>
    <property type="evidence" value="ECO:0007669"/>
    <property type="project" value="UniProtKB-KW"/>
</dbReference>
<dbReference type="GO" id="GO:0003677">
    <property type="term" value="F:DNA binding"/>
    <property type="evidence" value="ECO:0007669"/>
    <property type="project" value="UniProtKB-UniRule"/>
</dbReference>
<dbReference type="GO" id="GO:0003918">
    <property type="term" value="F:DNA topoisomerase type II (double strand cut, ATP-hydrolyzing) activity"/>
    <property type="evidence" value="ECO:0007669"/>
    <property type="project" value="UniProtKB-UniRule"/>
</dbReference>
<dbReference type="GO" id="GO:0000287">
    <property type="term" value="F:magnesium ion binding"/>
    <property type="evidence" value="ECO:0007669"/>
    <property type="project" value="UniProtKB-UniRule"/>
</dbReference>
<dbReference type="GO" id="GO:0006265">
    <property type="term" value="P:DNA topological change"/>
    <property type="evidence" value="ECO:0007669"/>
    <property type="project" value="UniProtKB-UniRule"/>
</dbReference>
<dbReference type="CDD" id="cd00223">
    <property type="entry name" value="TOPRIM_TopoIIB_SPO"/>
    <property type="match status" value="1"/>
</dbReference>
<dbReference type="Gene3D" id="3.40.1360.10">
    <property type="match status" value="1"/>
</dbReference>
<dbReference type="Gene3D" id="1.10.10.10">
    <property type="entry name" value="Winged helix-like DNA-binding domain superfamily/Winged helix DNA-binding domain"/>
    <property type="match status" value="1"/>
</dbReference>
<dbReference type="HAMAP" id="MF_00132">
    <property type="entry name" value="Top6A"/>
    <property type="match status" value="1"/>
</dbReference>
<dbReference type="InterPro" id="IPR002815">
    <property type="entry name" value="Spo11/TopoVI_A"/>
</dbReference>
<dbReference type="InterPro" id="IPR013049">
    <property type="entry name" value="Spo11/TopoVI_A_N"/>
</dbReference>
<dbReference type="InterPro" id="IPR036078">
    <property type="entry name" value="Spo11/TopoVI_A_sf"/>
</dbReference>
<dbReference type="InterPro" id="IPR049333">
    <property type="entry name" value="Topo_VI_alpha"/>
</dbReference>
<dbReference type="InterPro" id="IPR004085">
    <property type="entry name" value="TopoVI_A"/>
</dbReference>
<dbReference type="InterPro" id="IPR034136">
    <property type="entry name" value="TOPRIM_Topo6A/Spo11"/>
</dbReference>
<dbReference type="InterPro" id="IPR036388">
    <property type="entry name" value="WH-like_DNA-bd_sf"/>
</dbReference>
<dbReference type="NCBIfam" id="NF003334">
    <property type="entry name" value="PRK04342.1-3"/>
    <property type="match status" value="1"/>
</dbReference>
<dbReference type="PANTHER" id="PTHR10848">
    <property type="entry name" value="MEIOTIC RECOMBINATION PROTEIN SPO11"/>
    <property type="match status" value="1"/>
</dbReference>
<dbReference type="PANTHER" id="PTHR10848:SF0">
    <property type="entry name" value="MEIOTIC RECOMBINATION PROTEIN SPO11"/>
    <property type="match status" value="1"/>
</dbReference>
<dbReference type="Pfam" id="PF21180">
    <property type="entry name" value="TOP6A-Spo11_Toprim"/>
    <property type="match status" value="1"/>
</dbReference>
<dbReference type="Pfam" id="PF20768">
    <property type="entry name" value="Topo_VI_alpha"/>
    <property type="match status" value="1"/>
</dbReference>
<dbReference type="Pfam" id="PF04406">
    <property type="entry name" value="TP6A_N"/>
    <property type="match status" value="1"/>
</dbReference>
<dbReference type="PRINTS" id="PR01550">
    <property type="entry name" value="TOP6AFAMILY"/>
</dbReference>
<dbReference type="PRINTS" id="PR01552">
    <property type="entry name" value="TPISMRASE6A"/>
</dbReference>
<dbReference type="SUPFAM" id="SSF56726">
    <property type="entry name" value="DNA topoisomerase IV, alpha subunit"/>
    <property type="match status" value="1"/>
</dbReference>
<dbReference type="PROSITE" id="PS52041">
    <property type="entry name" value="TOPO_IIB"/>
    <property type="match status" value="1"/>
</dbReference>
<accession>O27089</accession>
<name>TOP6A_METTH</name>
<keyword id="KW-0067">ATP-binding</keyword>
<keyword id="KW-0238">DNA-binding</keyword>
<keyword id="KW-0413">Isomerase</keyword>
<keyword id="KW-0460">Magnesium</keyword>
<keyword id="KW-0479">Metal-binding</keyword>
<keyword id="KW-0547">Nucleotide-binding</keyword>
<keyword id="KW-1185">Reference proteome</keyword>
<keyword id="KW-0799">Topoisomerase</keyword>
<reference key="1">
    <citation type="journal article" date="1997" name="J. Bacteriol.">
        <title>Complete genome sequence of Methanobacterium thermoautotrophicum deltaH: functional analysis and comparative genomics.</title>
        <authorList>
            <person name="Smith D.R."/>
            <person name="Doucette-Stamm L.A."/>
            <person name="Deloughery C."/>
            <person name="Lee H.-M."/>
            <person name="Dubois J."/>
            <person name="Aldredge T."/>
            <person name="Bashirzadeh R."/>
            <person name="Blakely D."/>
            <person name="Cook R."/>
            <person name="Gilbert K."/>
            <person name="Harrison D."/>
            <person name="Hoang L."/>
            <person name="Keagle P."/>
            <person name="Lumm W."/>
            <person name="Pothier B."/>
            <person name="Qiu D."/>
            <person name="Spadafora R."/>
            <person name="Vicare R."/>
            <person name="Wang Y."/>
            <person name="Wierzbowski J."/>
            <person name="Gibson R."/>
            <person name="Jiwani N."/>
            <person name="Caruso A."/>
            <person name="Bush D."/>
            <person name="Safer H."/>
            <person name="Patwell D."/>
            <person name="Prabhakar S."/>
            <person name="McDougall S."/>
            <person name="Shimer G."/>
            <person name="Goyal A."/>
            <person name="Pietrovski S."/>
            <person name="Church G.M."/>
            <person name="Daniels C.J."/>
            <person name="Mao J.-I."/>
            <person name="Rice P."/>
            <person name="Noelling J."/>
            <person name="Reeve J.N."/>
        </authorList>
    </citation>
    <scope>NUCLEOTIDE SEQUENCE [LARGE SCALE GENOMIC DNA]</scope>
    <source>
        <strain>ATCC 29096 / DSM 1053 / JCM 10044 / NBRC 100330 / Delta H</strain>
    </source>
</reference>
<sequence length="353" mass="40029">MNRREIAINKLKSLGDVILDDVTQGRIPRIKVPSRGTSNIIYDEDKRHYVLGDRYGTRSMGNVKQIKKIGQMLYTANFCKDLVAREKTATLRELYYISEGWEVDFADQQESNIVGEDLEVTLGMTREELGLMPEEDGASVYGALTVREGDIEIDALRSGKSGYNISPTIDEVEFVDHDVERVIAVETMGMFHRLVQEKAYKKFDALIVGLKGQAARATRRFIKRVNEELNLPVYICNDGDPWGFHIAMVIISGSAKLAHVNHQLATPDAKFLGVTASDIINYDLPTDPLKDVDVVRLKELLQDPRYRGDFWKTEIKKMLTIGKKAEQQSFSKYGLEYVVDTYLPEKLEAVENQ</sequence>
<evidence type="ECO:0000255" key="1">
    <source>
        <dbReference type="HAMAP-Rule" id="MF_00132"/>
    </source>
</evidence>
<evidence type="ECO:0000255" key="2">
    <source>
        <dbReference type="PROSITE-ProRule" id="PRU01385"/>
    </source>
</evidence>
<protein>
    <recommendedName>
        <fullName evidence="1">Type 2 DNA topoisomerase 6 subunit A</fullName>
        <ecNumber evidence="1">5.6.2.2</ecNumber>
    </recommendedName>
    <alternativeName>
        <fullName evidence="1">Type II DNA topoisomerase VI subunit A</fullName>
    </alternativeName>
</protein>
<gene>
    <name evidence="1" type="primary">top6A</name>
    <name type="ordered locus">MTH_1008</name>
</gene>